<reference key="1">
    <citation type="journal article" date="2002" name="Nucleic Acids Res.">
        <title>Genome sequence of Shigella flexneri 2a: insights into pathogenicity through comparison with genomes of Escherichia coli K12 and O157.</title>
        <authorList>
            <person name="Jin Q."/>
            <person name="Yuan Z."/>
            <person name="Xu J."/>
            <person name="Wang Y."/>
            <person name="Shen Y."/>
            <person name="Lu W."/>
            <person name="Wang J."/>
            <person name="Liu H."/>
            <person name="Yang J."/>
            <person name="Yang F."/>
            <person name="Zhang X."/>
            <person name="Zhang J."/>
            <person name="Yang G."/>
            <person name="Wu H."/>
            <person name="Qu D."/>
            <person name="Dong J."/>
            <person name="Sun L."/>
            <person name="Xue Y."/>
            <person name="Zhao A."/>
            <person name="Gao Y."/>
            <person name="Zhu J."/>
            <person name="Kan B."/>
            <person name="Ding K."/>
            <person name="Chen S."/>
            <person name="Cheng H."/>
            <person name="Yao Z."/>
            <person name="He B."/>
            <person name="Chen R."/>
            <person name="Ma D."/>
            <person name="Qiang B."/>
            <person name="Wen Y."/>
            <person name="Hou Y."/>
            <person name="Yu J."/>
        </authorList>
    </citation>
    <scope>NUCLEOTIDE SEQUENCE [LARGE SCALE GENOMIC DNA]</scope>
    <source>
        <strain>301 / Serotype 2a</strain>
    </source>
</reference>
<reference key="2">
    <citation type="journal article" date="2003" name="Infect. Immun.">
        <title>Complete genome sequence and comparative genomics of Shigella flexneri serotype 2a strain 2457T.</title>
        <authorList>
            <person name="Wei J."/>
            <person name="Goldberg M.B."/>
            <person name="Burland V."/>
            <person name="Venkatesan M.M."/>
            <person name="Deng W."/>
            <person name="Fournier G."/>
            <person name="Mayhew G.F."/>
            <person name="Plunkett G. III"/>
            <person name="Rose D.J."/>
            <person name="Darling A."/>
            <person name="Mau B."/>
            <person name="Perna N.T."/>
            <person name="Payne S.M."/>
            <person name="Runyen-Janecky L.J."/>
            <person name="Zhou S."/>
            <person name="Schwartz D.C."/>
            <person name="Blattner F.R."/>
        </authorList>
    </citation>
    <scope>NUCLEOTIDE SEQUENCE [LARGE SCALE GENOMIC DNA]</scope>
    <source>
        <strain>ATCC 700930 / 2457T / Serotype 2a</strain>
    </source>
</reference>
<evidence type="ECO:0000255" key="1">
    <source>
        <dbReference type="HAMAP-Rule" id="MF_01663"/>
    </source>
</evidence>
<protein>
    <recommendedName>
        <fullName evidence="1">L-rhamnose mutarotase</fullName>
        <ecNumber evidence="1">5.1.3.32</ecNumber>
    </recommendedName>
    <alternativeName>
        <fullName evidence="1">Rhamnose 1-epimerase</fullName>
    </alternativeName>
    <alternativeName>
        <fullName evidence="1">Type-3 mutarotase</fullName>
    </alternativeName>
</protein>
<feature type="chain" id="PRO_0000344606" description="L-rhamnose mutarotase">
    <location>
        <begin position="1"/>
        <end position="104"/>
    </location>
</feature>
<feature type="active site" description="Proton donor" evidence="1">
    <location>
        <position position="22"/>
    </location>
</feature>
<feature type="binding site" evidence="1">
    <location>
        <position position="18"/>
    </location>
    <ligand>
        <name>substrate</name>
    </ligand>
</feature>
<feature type="binding site" evidence="1">
    <location>
        <position position="41"/>
    </location>
    <ligand>
        <name>substrate</name>
    </ligand>
</feature>
<feature type="binding site" evidence="1">
    <location>
        <begin position="76"/>
        <end position="77"/>
    </location>
    <ligand>
        <name>substrate</name>
    </ligand>
</feature>
<keyword id="KW-0119">Carbohydrate metabolism</keyword>
<keyword id="KW-0963">Cytoplasm</keyword>
<keyword id="KW-0413">Isomerase</keyword>
<keyword id="KW-1185">Reference proteome</keyword>
<keyword id="KW-0684">Rhamnose metabolism</keyword>
<dbReference type="EC" id="5.1.3.32" evidence="1"/>
<dbReference type="EMBL" id="AE005674">
    <property type="protein sequence ID" value="AAN45412.1"/>
    <property type="molecule type" value="Genomic_DNA"/>
</dbReference>
<dbReference type="EMBL" id="AE014073">
    <property type="protein sequence ID" value="AAP18787.1"/>
    <property type="molecule type" value="Genomic_DNA"/>
</dbReference>
<dbReference type="RefSeq" id="WP_000619511.1">
    <property type="nucleotide sequence ID" value="NZ_WPGW01000095.1"/>
</dbReference>
<dbReference type="SMR" id="Q83IU5"/>
<dbReference type="STRING" id="198214.SF3978"/>
<dbReference type="PaxDb" id="198214-SF3978"/>
<dbReference type="KEGG" id="sfl:SF3978"/>
<dbReference type="KEGG" id="sfx:S3770"/>
<dbReference type="PATRIC" id="fig|198214.7.peg.4686"/>
<dbReference type="HOGENOM" id="CLU_100689_2_0_6"/>
<dbReference type="UniPathway" id="UPA00125"/>
<dbReference type="Proteomes" id="UP000001006">
    <property type="component" value="Chromosome"/>
</dbReference>
<dbReference type="Proteomes" id="UP000002673">
    <property type="component" value="Chromosome"/>
</dbReference>
<dbReference type="GO" id="GO:0005737">
    <property type="term" value="C:cytoplasm"/>
    <property type="evidence" value="ECO:0007669"/>
    <property type="project" value="UniProtKB-SubCell"/>
</dbReference>
<dbReference type="GO" id="GO:0062192">
    <property type="term" value="F:L-rhamnose mutarotase activity"/>
    <property type="evidence" value="ECO:0007669"/>
    <property type="project" value="UniProtKB-EC"/>
</dbReference>
<dbReference type="GO" id="GO:0019301">
    <property type="term" value="P:rhamnose catabolic process"/>
    <property type="evidence" value="ECO:0007669"/>
    <property type="project" value="TreeGrafter"/>
</dbReference>
<dbReference type="FunFam" id="3.30.70.100:FF:000013">
    <property type="entry name" value="L-rhamnose mutarotase"/>
    <property type="match status" value="1"/>
</dbReference>
<dbReference type="Gene3D" id="3.30.70.100">
    <property type="match status" value="1"/>
</dbReference>
<dbReference type="HAMAP" id="MF_01663">
    <property type="entry name" value="L_rham_rotase"/>
    <property type="match status" value="1"/>
</dbReference>
<dbReference type="InterPro" id="IPR011008">
    <property type="entry name" value="Dimeric_a/b-barrel"/>
</dbReference>
<dbReference type="InterPro" id="IPR013448">
    <property type="entry name" value="L-rhamnose_mutarotase"/>
</dbReference>
<dbReference type="InterPro" id="IPR008000">
    <property type="entry name" value="Rham/fucose_mutarotase"/>
</dbReference>
<dbReference type="NCBIfam" id="TIGR02625">
    <property type="entry name" value="YiiL_rotase"/>
    <property type="match status" value="1"/>
</dbReference>
<dbReference type="PANTHER" id="PTHR34389">
    <property type="entry name" value="L-RHAMNOSE MUTAROTASE"/>
    <property type="match status" value="1"/>
</dbReference>
<dbReference type="PANTHER" id="PTHR34389:SF2">
    <property type="entry name" value="L-RHAMNOSE MUTAROTASE"/>
    <property type="match status" value="1"/>
</dbReference>
<dbReference type="Pfam" id="PF05336">
    <property type="entry name" value="rhaM"/>
    <property type="match status" value="1"/>
</dbReference>
<dbReference type="SUPFAM" id="SSF54909">
    <property type="entry name" value="Dimeric alpha+beta barrel"/>
    <property type="match status" value="1"/>
</dbReference>
<proteinExistence type="inferred from homology"/>
<accession>Q83IU5</accession>
<accession>Q7BZF0</accession>
<gene>
    <name evidence="1" type="primary">rhaM</name>
    <name type="ordered locus">SF3978</name>
    <name type="ordered locus">S3770</name>
</gene>
<organism>
    <name type="scientific">Shigella flexneri</name>
    <dbReference type="NCBI Taxonomy" id="623"/>
    <lineage>
        <taxon>Bacteria</taxon>
        <taxon>Pseudomonadati</taxon>
        <taxon>Pseudomonadota</taxon>
        <taxon>Gammaproteobacteria</taxon>
        <taxon>Enterobacterales</taxon>
        <taxon>Enterobacteriaceae</taxon>
        <taxon>Shigella</taxon>
    </lineage>
</organism>
<comment type="function">
    <text evidence="1">Involved in the anomeric conversion of L-rhamnose.</text>
</comment>
<comment type="catalytic activity">
    <reaction evidence="1">
        <text>alpha-L-rhamnose = beta-L-rhamnose</text>
        <dbReference type="Rhea" id="RHEA:25584"/>
        <dbReference type="ChEBI" id="CHEBI:27586"/>
        <dbReference type="ChEBI" id="CHEBI:27907"/>
        <dbReference type="EC" id="5.1.3.32"/>
    </reaction>
</comment>
<comment type="pathway">
    <text evidence="1">Carbohydrate metabolism; L-rhamnose metabolism.</text>
</comment>
<comment type="subunit">
    <text evidence="1">Homodimer.</text>
</comment>
<comment type="subcellular location">
    <subcellularLocation>
        <location evidence="1">Cytoplasm</location>
    </subcellularLocation>
</comment>
<comment type="similarity">
    <text evidence="1">Belongs to the rhamnose mutarotase family.</text>
</comment>
<sequence>MIRKAFVMQVNPDAHEEYQRRHNPIWPELEAVLKSHGVHNYAIYLDKARNLLFAMVEIESEERWNAVASTDVCQRWWKYMTDVMPANPDNSPVSSELQEVFYLP</sequence>
<name>RHAM_SHIFL</name>